<feature type="chain" id="PRO_0000066874" description="Inositol hexakisphosphate kinase 1">
    <location>
        <begin position="1"/>
        <end position="441"/>
    </location>
</feature>
<feature type="region of interest" description="Disordered" evidence="2">
    <location>
        <begin position="100"/>
        <end position="175"/>
    </location>
</feature>
<feature type="region of interest" description="Disordered" evidence="2">
    <location>
        <begin position="370"/>
        <end position="392"/>
    </location>
</feature>
<feature type="compositionally biased region" description="Basic residues" evidence="2">
    <location>
        <begin position="113"/>
        <end position="123"/>
    </location>
</feature>
<feature type="compositionally biased region" description="Low complexity" evidence="2">
    <location>
        <begin position="137"/>
        <end position="149"/>
    </location>
</feature>
<feature type="compositionally biased region" description="Basic and acidic residues" evidence="2">
    <location>
        <begin position="150"/>
        <end position="160"/>
    </location>
</feature>
<feature type="compositionally biased region" description="Polar residues" evidence="2">
    <location>
        <begin position="372"/>
        <end position="391"/>
    </location>
</feature>
<feature type="binding site" evidence="1">
    <location>
        <begin position="220"/>
        <end position="228"/>
    </location>
    <ligand>
        <name>substrate</name>
    </ligand>
</feature>
<feature type="modified residue" description="Phosphoserine" evidence="6">
    <location>
        <position position="151"/>
    </location>
</feature>
<feature type="splice variant" id="VSP_042756" description="In isoform 2." evidence="4">
    <location>
        <begin position="1"/>
        <end position="165"/>
    </location>
</feature>
<comment type="function">
    <text>Converts inositol hexakisphosphate (InsP6) to diphosphoinositol pentakisphosphate (InsP7/PP-InsP5). Converts 1,3,4,5,6-pentakisphosphate (InsP5) to PP-InsP4.</text>
</comment>
<comment type="catalytic activity">
    <reaction>
        <text>1D-myo-inositol hexakisphosphate + ATP = 5-diphospho-1D-myo-inositol 1,2,3,4,6-pentakisphosphate + ADP</text>
        <dbReference type="Rhea" id="RHEA:12793"/>
        <dbReference type="ChEBI" id="CHEBI:30616"/>
        <dbReference type="ChEBI" id="CHEBI:58130"/>
        <dbReference type="ChEBI" id="CHEBI:58628"/>
        <dbReference type="ChEBI" id="CHEBI:456216"/>
        <dbReference type="EC" id="2.7.4.21"/>
    </reaction>
</comment>
<comment type="catalytic activity">
    <reaction>
        <text>1-diphospho-1D-myo-inositol 2,3,4,5,6-pentakisphosphate + ATP + H(+) = 1,5-bis(diphospho)-1D-myo-inositol 2,3,4,6-tetrakisphosphate + ADP</text>
        <dbReference type="Rhea" id="RHEA:37467"/>
        <dbReference type="ChEBI" id="CHEBI:15378"/>
        <dbReference type="ChEBI" id="CHEBI:30616"/>
        <dbReference type="ChEBI" id="CHEBI:74946"/>
        <dbReference type="ChEBI" id="CHEBI:77983"/>
        <dbReference type="ChEBI" id="CHEBI:456216"/>
        <dbReference type="EC" id="2.7.4.21"/>
    </reaction>
</comment>
<comment type="interaction">
    <interactant intactId="EBI-751911">
        <id>Q92551</id>
    </interactant>
    <interactant intactId="EBI-10173507">
        <id>Q6UY14-3</id>
        <label>ADAMTSL4</label>
    </interactant>
    <organismsDiffer>false</organismsDiffer>
    <experiments>3</experiments>
</comment>
<comment type="interaction">
    <interactant intactId="EBI-751911">
        <id>Q92551</id>
    </interactant>
    <interactant intactId="EBI-371841">
        <id>Q15024</id>
        <label>EXOSC7</label>
    </interactant>
    <organismsDiffer>false</organismsDiffer>
    <experiments>6</experiments>
</comment>
<comment type="interaction">
    <interactant intactId="EBI-751911">
        <id>Q92551</id>
    </interactant>
    <interactant intactId="EBI-79165">
        <id>Q9NRD5</id>
        <label>PICK1</label>
    </interactant>
    <organismsDiffer>false</organismsDiffer>
    <experiments>3</experiments>
</comment>
<comment type="interaction">
    <interactant intactId="EBI-751911">
        <id>Q92551</id>
    </interactant>
    <interactant intactId="EBI-11027771">
        <id>P62913-2</id>
        <label>RPL11</label>
    </interactant>
    <organismsDiffer>false</organismsDiffer>
    <experiments>3</experiments>
</comment>
<comment type="interaction">
    <interactant intactId="EBI-751911">
        <id>Q92551</id>
    </interactant>
    <interactant intactId="EBI-1048119">
        <id>Q14139</id>
        <label>UBE4A</label>
    </interactant>
    <organismsDiffer>false</organismsDiffer>
    <experiments>4</experiments>
</comment>
<comment type="interaction">
    <interactant intactId="EBI-751911">
        <id>Q92551</id>
    </interactant>
    <interactant intactId="EBI-353844">
        <id>P08670</id>
        <label>VIM</label>
    </interactant>
    <organismsDiffer>false</organismsDiffer>
    <experiments>3</experiments>
</comment>
<comment type="subcellular location">
    <subcellularLocation>
        <location evidence="3">Cytoplasm</location>
    </subcellularLocation>
    <subcellularLocation>
        <location evidence="3">Nucleus</location>
    </subcellularLocation>
</comment>
<comment type="alternative products">
    <event type="alternative splicing"/>
    <isoform>
        <id>Q92551-1</id>
        <name>1</name>
        <sequence type="displayed"/>
    </isoform>
    <isoform>
        <id>Q92551-2</id>
        <name>2</name>
        <sequence type="described" ref="VSP_042756"/>
    </isoform>
</comment>
<comment type="similarity">
    <text evidence="5">Belongs to the inositol phosphokinase (IPK) family.</text>
</comment>
<comment type="sequence caution" evidence="5">
    <conflict type="erroneous initiation">
        <sequence resource="EMBL-CDS" id="BAA13393"/>
    </conflict>
</comment>
<name>IP6K1_HUMAN</name>
<protein>
    <recommendedName>
        <fullName>Inositol hexakisphosphate kinase 1</fullName>
        <shortName>InsP6 kinase 1</shortName>
        <ecNumber>2.7.4.21</ecNumber>
    </recommendedName>
    <alternativeName>
        <fullName>Inositol hexaphosphate kinase 1</fullName>
    </alternativeName>
</protein>
<keyword id="KW-0025">Alternative splicing</keyword>
<keyword id="KW-0067">ATP-binding</keyword>
<keyword id="KW-0963">Cytoplasm</keyword>
<keyword id="KW-0418">Kinase</keyword>
<keyword id="KW-0547">Nucleotide-binding</keyword>
<keyword id="KW-0539">Nucleus</keyword>
<keyword id="KW-0597">Phosphoprotein</keyword>
<keyword id="KW-1267">Proteomics identification</keyword>
<keyword id="KW-1185">Reference proteome</keyword>
<keyword id="KW-0808">Transferase</keyword>
<proteinExistence type="evidence at protein level"/>
<dbReference type="EC" id="2.7.4.21"/>
<dbReference type="EMBL" id="D87452">
    <property type="protein sequence ID" value="BAA13393.2"/>
    <property type="status" value="ALT_INIT"/>
    <property type="molecule type" value="mRNA"/>
</dbReference>
<dbReference type="EMBL" id="AK289772">
    <property type="protein sequence ID" value="BAF82461.1"/>
    <property type="molecule type" value="mRNA"/>
</dbReference>
<dbReference type="EMBL" id="AK295689">
    <property type="protein sequence ID" value="BAG58541.1"/>
    <property type="molecule type" value="mRNA"/>
</dbReference>
<dbReference type="EMBL" id="AC099668">
    <property type="status" value="NOT_ANNOTATED_CDS"/>
    <property type="molecule type" value="Genomic_DNA"/>
</dbReference>
<dbReference type="EMBL" id="AC139451">
    <property type="status" value="NOT_ANNOTATED_CDS"/>
    <property type="molecule type" value="Genomic_DNA"/>
</dbReference>
<dbReference type="EMBL" id="AC141000">
    <property type="status" value="NOT_ANNOTATED_CDS"/>
    <property type="molecule type" value="Genomic_DNA"/>
</dbReference>
<dbReference type="EMBL" id="CH471055">
    <property type="protein sequence ID" value="EAW65016.1"/>
    <property type="molecule type" value="Genomic_DNA"/>
</dbReference>
<dbReference type="EMBL" id="BC012944">
    <property type="protein sequence ID" value="AAH12944.1"/>
    <property type="molecule type" value="mRNA"/>
</dbReference>
<dbReference type="CCDS" id="CCDS33760.1">
    <molecule id="Q92551-1"/>
</dbReference>
<dbReference type="CCDS" id="CCDS43092.1">
    <molecule id="Q92551-2"/>
</dbReference>
<dbReference type="RefSeq" id="NP_001006115.1">
    <molecule id="Q92551-2"/>
    <property type="nucleotide sequence ID" value="NM_001006115.3"/>
</dbReference>
<dbReference type="RefSeq" id="NP_001229758.1">
    <molecule id="Q92551-1"/>
    <property type="nucleotide sequence ID" value="NM_001242829.2"/>
</dbReference>
<dbReference type="RefSeq" id="NP_695005.1">
    <molecule id="Q92551-1"/>
    <property type="nucleotide sequence ID" value="NM_153273.4"/>
</dbReference>
<dbReference type="RefSeq" id="XP_047305279.1">
    <molecule id="Q92551-1"/>
    <property type="nucleotide sequence ID" value="XM_047449323.1"/>
</dbReference>
<dbReference type="RefSeq" id="XP_047305280.1">
    <molecule id="Q92551-1"/>
    <property type="nucleotide sequence ID" value="XM_047449324.1"/>
</dbReference>
<dbReference type="RefSeq" id="XP_054204557.1">
    <molecule id="Q92551-1"/>
    <property type="nucleotide sequence ID" value="XM_054348582.1"/>
</dbReference>
<dbReference type="RefSeq" id="XP_054204558.1">
    <molecule id="Q92551-1"/>
    <property type="nucleotide sequence ID" value="XM_054348583.1"/>
</dbReference>
<dbReference type="SMR" id="Q92551"/>
<dbReference type="BioGRID" id="115147">
    <property type="interactions" value="53"/>
</dbReference>
<dbReference type="FunCoup" id="Q92551">
    <property type="interactions" value="3082"/>
</dbReference>
<dbReference type="IntAct" id="Q92551">
    <property type="interactions" value="31"/>
</dbReference>
<dbReference type="STRING" id="9606.ENSP00000482032"/>
<dbReference type="BindingDB" id="Q92551"/>
<dbReference type="ChEMBL" id="CHEMBL4523418"/>
<dbReference type="GlyGen" id="Q92551">
    <property type="glycosylation" value="1 site, 1 O-linked glycan (1 site)"/>
</dbReference>
<dbReference type="iPTMnet" id="Q92551"/>
<dbReference type="PhosphoSitePlus" id="Q92551"/>
<dbReference type="BioMuta" id="IP6K1"/>
<dbReference type="DMDM" id="50400597"/>
<dbReference type="jPOST" id="Q92551"/>
<dbReference type="MassIVE" id="Q92551"/>
<dbReference type="PaxDb" id="9606-ENSP00000482032"/>
<dbReference type="PeptideAtlas" id="Q92551"/>
<dbReference type="ProteomicsDB" id="75309">
    <molecule id="Q92551-1"/>
</dbReference>
<dbReference type="ProteomicsDB" id="75310">
    <molecule id="Q92551-2"/>
</dbReference>
<dbReference type="Pumba" id="Q92551"/>
<dbReference type="Antibodypedia" id="30640">
    <property type="antibodies" value="239 antibodies from 28 providers"/>
</dbReference>
<dbReference type="DNASU" id="9807"/>
<dbReference type="Ensembl" id="ENST00000321599.9">
    <molecule id="Q92551-1"/>
    <property type="protein sequence ID" value="ENSP00000323780.4"/>
    <property type="gene ID" value="ENSG00000176095.12"/>
</dbReference>
<dbReference type="Ensembl" id="ENST00000395238.5">
    <molecule id="Q92551-2"/>
    <property type="protein sequence ID" value="ENSP00000378659.1"/>
    <property type="gene ID" value="ENSG00000176095.12"/>
</dbReference>
<dbReference type="Ensembl" id="ENST00000460540.1">
    <molecule id="Q92551-2"/>
    <property type="protein sequence ID" value="ENSP00000420762.1"/>
    <property type="gene ID" value="ENSG00000176095.12"/>
</dbReference>
<dbReference type="Ensembl" id="ENST00000613416.4">
    <molecule id="Q92551-1"/>
    <property type="protein sequence ID" value="ENSP00000482032.1"/>
    <property type="gene ID" value="ENSG00000176095.12"/>
</dbReference>
<dbReference type="GeneID" id="9807"/>
<dbReference type="KEGG" id="hsa:9807"/>
<dbReference type="MANE-Select" id="ENST00000321599.9">
    <property type="protein sequence ID" value="ENSP00000323780.4"/>
    <property type="RefSeq nucleotide sequence ID" value="NM_153273.4"/>
    <property type="RefSeq protein sequence ID" value="NP_695005.1"/>
</dbReference>
<dbReference type="UCSC" id="uc003cxm.2">
    <molecule id="Q92551-1"/>
    <property type="organism name" value="human"/>
</dbReference>
<dbReference type="AGR" id="HGNC:18360"/>
<dbReference type="CTD" id="9807"/>
<dbReference type="DisGeNET" id="9807"/>
<dbReference type="GeneCards" id="IP6K1"/>
<dbReference type="HGNC" id="HGNC:18360">
    <property type="gene designation" value="IP6K1"/>
</dbReference>
<dbReference type="HPA" id="ENSG00000176095">
    <property type="expression patterns" value="Low tissue specificity"/>
</dbReference>
<dbReference type="MIM" id="606991">
    <property type="type" value="gene"/>
</dbReference>
<dbReference type="neXtProt" id="NX_Q92551"/>
<dbReference type="OpenTargets" id="ENSG00000176095"/>
<dbReference type="PharmGKB" id="PA164720982"/>
<dbReference type="VEuPathDB" id="HostDB:ENSG00000176095"/>
<dbReference type="eggNOG" id="KOG1620">
    <property type="taxonomic scope" value="Eukaryota"/>
</dbReference>
<dbReference type="GeneTree" id="ENSGT00940000157802"/>
<dbReference type="HOGENOM" id="CLU_014862_0_0_1"/>
<dbReference type="InParanoid" id="Q92551"/>
<dbReference type="OMA" id="CRAEMFL"/>
<dbReference type="OrthoDB" id="2573163at2759"/>
<dbReference type="PAN-GO" id="Q92551">
    <property type="GO annotations" value="5 GO annotations based on evolutionary models"/>
</dbReference>
<dbReference type="PhylomeDB" id="Q92551"/>
<dbReference type="TreeFam" id="TF314066"/>
<dbReference type="BioCyc" id="MetaCyc:HS10997-MONOMER"/>
<dbReference type="BRENDA" id="2.7.4.21">
    <property type="organism ID" value="2681"/>
</dbReference>
<dbReference type="PathwayCommons" id="Q92551"/>
<dbReference type="Reactome" id="R-HSA-1855167">
    <property type="pathway name" value="Synthesis of pyrophosphates in the cytosol"/>
</dbReference>
<dbReference type="Reactome" id="R-HSA-1855191">
    <property type="pathway name" value="Synthesis of IPs in the nucleus"/>
</dbReference>
<dbReference type="SignaLink" id="Q92551"/>
<dbReference type="BioGRID-ORCS" id="9807">
    <property type="hits" value="11 hits in 1161 CRISPR screens"/>
</dbReference>
<dbReference type="ChiTaRS" id="IP6K1">
    <property type="organism name" value="human"/>
</dbReference>
<dbReference type="GeneWiki" id="IHPK1"/>
<dbReference type="GenomeRNAi" id="9807"/>
<dbReference type="Pharos" id="Q92551">
    <property type="development level" value="Tbio"/>
</dbReference>
<dbReference type="PRO" id="PR:Q92551"/>
<dbReference type="Proteomes" id="UP000005640">
    <property type="component" value="Chromosome 3"/>
</dbReference>
<dbReference type="RNAct" id="Q92551">
    <property type="molecule type" value="protein"/>
</dbReference>
<dbReference type="Bgee" id="ENSG00000176095">
    <property type="expression patterns" value="Expressed in paraflocculus and 175 other cell types or tissues"/>
</dbReference>
<dbReference type="ExpressionAtlas" id="Q92551">
    <property type="expression patterns" value="baseline and differential"/>
</dbReference>
<dbReference type="GO" id="GO:0005737">
    <property type="term" value="C:cytoplasm"/>
    <property type="evidence" value="ECO:0000318"/>
    <property type="project" value="GO_Central"/>
</dbReference>
<dbReference type="GO" id="GO:0005829">
    <property type="term" value="C:cytosol"/>
    <property type="evidence" value="ECO:0000314"/>
    <property type="project" value="HPA"/>
</dbReference>
<dbReference type="GO" id="GO:0001650">
    <property type="term" value="C:fibrillar center"/>
    <property type="evidence" value="ECO:0000314"/>
    <property type="project" value="HPA"/>
</dbReference>
<dbReference type="GO" id="GO:0005654">
    <property type="term" value="C:nucleoplasm"/>
    <property type="evidence" value="ECO:0000314"/>
    <property type="project" value="HPA"/>
</dbReference>
<dbReference type="GO" id="GO:0005634">
    <property type="term" value="C:nucleus"/>
    <property type="evidence" value="ECO:0000318"/>
    <property type="project" value="GO_Central"/>
</dbReference>
<dbReference type="GO" id="GO:0005524">
    <property type="term" value="F:ATP binding"/>
    <property type="evidence" value="ECO:0007669"/>
    <property type="project" value="UniProtKB-KW"/>
</dbReference>
<dbReference type="GO" id="GO:0000829">
    <property type="term" value="F:diphosphoinositol pentakisphosphate kinase activity"/>
    <property type="evidence" value="ECO:0000304"/>
    <property type="project" value="Reactome"/>
</dbReference>
<dbReference type="GO" id="GO:0052839">
    <property type="term" value="F:diphosphoinositol tetrakisphosphate kinase activity"/>
    <property type="evidence" value="ECO:0000304"/>
    <property type="project" value="Reactome"/>
</dbReference>
<dbReference type="GO" id="GO:0052836">
    <property type="term" value="F:inositol 5-diphosphate pentakisphosphate 5-kinase activity"/>
    <property type="evidence" value="ECO:0000304"/>
    <property type="project" value="Reactome"/>
</dbReference>
<dbReference type="GO" id="GO:0000832">
    <property type="term" value="F:inositol hexakisphosphate 5-kinase activity"/>
    <property type="evidence" value="ECO:0007669"/>
    <property type="project" value="RHEA"/>
</dbReference>
<dbReference type="GO" id="GO:0000828">
    <property type="term" value="F:inositol hexakisphosphate kinase activity"/>
    <property type="evidence" value="ECO:0000314"/>
    <property type="project" value="UniProtKB"/>
</dbReference>
<dbReference type="GO" id="GO:0000827">
    <property type="term" value="F:inositol-1,3,4,5,6-pentakisphosphate kinase activity"/>
    <property type="evidence" value="ECO:0000304"/>
    <property type="project" value="Reactome"/>
</dbReference>
<dbReference type="GO" id="GO:0032958">
    <property type="term" value="P:inositol phosphate biosynthetic process"/>
    <property type="evidence" value="ECO:0000318"/>
    <property type="project" value="GO_Central"/>
</dbReference>
<dbReference type="GO" id="GO:0043647">
    <property type="term" value="P:inositol phosphate metabolic process"/>
    <property type="evidence" value="ECO:0000304"/>
    <property type="project" value="Reactome"/>
</dbReference>
<dbReference type="GO" id="GO:0120163">
    <property type="term" value="P:negative regulation of cold-induced thermogenesis"/>
    <property type="evidence" value="ECO:0000250"/>
    <property type="project" value="YuBioLab"/>
</dbReference>
<dbReference type="GO" id="GO:0046854">
    <property type="term" value="P:phosphatidylinositol phosphate biosynthetic process"/>
    <property type="evidence" value="ECO:0000314"/>
    <property type="project" value="UniProtKB"/>
</dbReference>
<dbReference type="FunFam" id="3.30.470.160:FF:000002">
    <property type="entry name" value="Kinase"/>
    <property type="match status" value="1"/>
</dbReference>
<dbReference type="Gene3D" id="3.30.470.160">
    <property type="entry name" value="Inositol polyphosphate kinase"/>
    <property type="match status" value="1"/>
</dbReference>
<dbReference type="InterPro" id="IPR005522">
    <property type="entry name" value="IPK"/>
</dbReference>
<dbReference type="InterPro" id="IPR038286">
    <property type="entry name" value="IPK_sf"/>
</dbReference>
<dbReference type="PANTHER" id="PTHR12400:SF73">
    <property type="entry name" value="INOSITOL HEXAKISPHOSPHATE KINASE 1"/>
    <property type="match status" value="1"/>
</dbReference>
<dbReference type="PANTHER" id="PTHR12400">
    <property type="entry name" value="INOSITOL POLYPHOSPHATE KINASE"/>
    <property type="match status" value="1"/>
</dbReference>
<dbReference type="Pfam" id="PF03770">
    <property type="entry name" value="IPK"/>
    <property type="match status" value="1"/>
</dbReference>
<dbReference type="SUPFAM" id="SSF56104">
    <property type="entry name" value="SAICAR synthase-like"/>
    <property type="match status" value="1"/>
</dbReference>
<sequence length="441" mass="50236">MCVCQTMEVGQYGKNASRAGDRGVLLEPFIHQVGGHSSMMRYDDHTVCKPLISREQRFYESLPPEMKEFTPEYKGVVSVCFEGDSDGYINLVAYPYVESETVEQDDTTEREQPRRKHSRRSLHRSGSGSDHKEEKASLSLETSESSQEAKSPKVELHSHSEVPFQMLDGNSGLSSEKISHNPWSLRCHKQQLSRMRSESKDRKLYKFLLLENVVHHFKYPCVLDLKMGTRQHGDDASAEKAARQMRKCEQSTSATLGVRVCGMQVYQLDTGHYLCRNKYYGRGLSIEGFRNALYQYLHNGLDLRRDLFEPILSKLRGLKAVLERQASYRFYSSSLLVIYDGKECRAESCLDRRSEMRLKHLDMVLPEVASSCGPSTSPSNTSPEAGPSSQPKVDVRMIDFAHSTFKGFRDDPTVHDGPDRGYVFGLENLISIMEQMRDENQ</sequence>
<accession>Q92551</accession>
<accession>A8K157</accession>
<accession>A8MUX4</accession>
<accession>Q7L3I7</accession>
<accession>Q96E38</accession>
<gene>
    <name type="primary">IP6K1</name>
    <name type="synonym">IHPK1</name>
    <name type="synonym">KIAA0263</name>
</gene>
<reference key="1">
    <citation type="journal article" date="1996" name="DNA Res.">
        <title>Prediction of the coding sequences of unidentified human genes. VI. The coding sequences of 80 new genes (KIAA0201-KIAA0280) deduced by analysis of cDNA clones from cell line KG-1 and brain.</title>
        <authorList>
            <person name="Nagase T."/>
            <person name="Seki N."/>
            <person name="Ishikawa K."/>
            <person name="Ohira M."/>
            <person name="Kawarabayasi Y."/>
            <person name="Ohara O."/>
            <person name="Tanaka A."/>
            <person name="Kotani H."/>
            <person name="Miyajima N."/>
            <person name="Nomura N."/>
        </authorList>
    </citation>
    <scope>NUCLEOTIDE SEQUENCE [LARGE SCALE MRNA] (ISOFORM 1)</scope>
    <source>
        <tissue>Bone marrow</tissue>
    </source>
</reference>
<reference key="2">
    <citation type="journal article" date="2004" name="Nat. Genet.">
        <title>Complete sequencing and characterization of 21,243 full-length human cDNAs.</title>
        <authorList>
            <person name="Ota T."/>
            <person name="Suzuki Y."/>
            <person name="Nishikawa T."/>
            <person name="Otsuki T."/>
            <person name="Sugiyama T."/>
            <person name="Irie R."/>
            <person name="Wakamatsu A."/>
            <person name="Hayashi K."/>
            <person name="Sato H."/>
            <person name="Nagai K."/>
            <person name="Kimura K."/>
            <person name="Makita H."/>
            <person name="Sekine M."/>
            <person name="Obayashi M."/>
            <person name="Nishi T."/>
            <person name="Shibahara T."/>
            <person name="Tanaka T."/>
            <person name="Ishii S."/>
            <person name="Yamamoto J."/>
            <person name="Saito K."/>
            <person name="Kawai Y."/>
            <person name="Isono Y."/>
            <person name="Nakamura Y."/>
            <person name="Nagahari K."/>
            <person name="Murakami K."/>
            <person name="Yasuda T."/>
            <person name="Iwayanagi T."/>
            <person name="Wagatsuma M."/>
            <person name="Shiratori A."/>
            <person name="Sudo H."/>
            <person name="Hosoiri T."/>
            <person name="Kaku Y."/>
            <person name="Kodaira H."/>
            <person name="Kondo H."/>
            <person name="Sugawara M."/>
            <person name="Takahashi M."/>
            <person name="Kanda K."/>
            <person name="Yokoi T."/>
            <person name="Furuya T."/>
            <person name="Kikkawa E."/>
            <person name="Omura Y."/>
            <person name="Abe K."/>
            <person name="Kamihara K."/>
            <person name="Katsuta N."/>
            <person name="Sato K."/>
            <person name="Tanikawa M."/>
            <person name="Yamazaki M."/>
            <person name="Ninomiya K."/>
            <person name="Ishibashi T."/>
            <person name="Yamashita H."/>
            <person name="Murakawa K."/>
            <person name="Fujimori K."/>
            <person name="Tanai H."/>
            <person name="Kimata M."/>
            <person name="Watanabe M."/>
            <person name="Hiraoka S."/>
            <person name="Chiba Y."/>
            <person name="Ishida S."/>
            <person name="Ono Y."/>
            <person name="Takiguchi S."/>
            <person name="Watanabe S."/>
            <person name="Yosida M."/>
            <person name="Hotuta T."/>
            <person name="Kusano J."/>
            <person name="Kanehori K."/>
            <person name="Takahashi-Fujii A."/>
            <person name="Hara H."/>
            <person name="Tanase T.-O."/>
            <person name="Nomura Y."/>
            <person name="Togiya S."/>
            <person name="Komai F."/>
            <person name="Hara R."/>
            <person name="Takeuchi K."/>
            <person name="Arita M."/>
            <person name="Imose N."/>
            <person name="Musashino K."/>
            <person name="Yuuki H."/>
            <person name="Oshima A."/>
            <person name="Sasaki N."/>
            <person name="Aotsuka S."/>
            <person name="Yoshikawa Y."/>
            <person name="Matsunawa H."/>
            <person name="Ichihara T."/>
            <person name="Shiohata N."/>
            <person name="Sano S."/>
            <person name="Moriya S."/>
            <person name="Momiyama H."/>
            <person name="Satoh N."/>
            <person name="Takami S."/>
            <person name="Terashima Y."/>
            <person name="Suzuki O."/>
            <person name="Nakagawa S."/>
            <person name="Senoh A."/>
            <person name="Mizoguchi H."/>
            <person name="Goto Y."/>
            <person name="Shimizu F."/>
            <person name="Wakebe H."/>
            <person name="Hishigaki H."/>
            <person name="Watanabe T."/>
            <person name="Sugiyama A."/>
            <person name="Takemoto M."/>
            <person name="Kawakami B."/>
            <person name="Yamazaki M."/>
            <person name="Watanabe K."/>
            <person name="Kumagai A."/>
            <person name="Itakura S."/>
            <person name="Fukuzumi Y."/>
            <person name="Fujimori Y."/>
            <person name="Komiyama M."/>
            <person name="Tashiro H."/>
            <person name="Tanigami A."/>
            <person name="Fujiwara T."/>
            <person name="Ono T."/>
            <person name="Yamada K."/>
            <person name="Fujii Y."/>
            <person name="Ozaki K."/>
            <person name="Hirao M."/>
            <person name="Ohmori Y."/>
            <person name="Kawabata A."/>
            <person name="Hikiji T."/>
            <person name="Kobatake N."/>
            <person name="Inagaki H."/>
            <person name="Ikema Y."/>
            <person name="Okamoto S."/>
            <person name="Okitani R."/>
            <person name="Kawakami T."/>
            <person name="Noguchi S."/>
            <person name="Itoh T."/>
            <person name="Shigeta K."/>
            <person name="Senba T."/>
            <person name="Matsumura K."/>
            <person name="Nakajima Y."/>
            <person name="Mizuno T."/>
            <person name="Morinaga M."/>
            <person name="Sasaki M."/>
            <person name="Togashi T."/>
            <person name="Oyama M."/>
            <person name="Hata H."/>
            <person name="Watanabe M."/>
            <person name="Komatsu T."/>
            <person name="Mizushima-Sugano J."/>
            <person name="Satoh T."/>
            <person name="Shirai Y."/>
            <person name="Takahashi Y."/>
            <person name="Nakagawa K."/>
            <person name="Okumura K."/>
            <person name="Nagase T."/>
            <person name="Nomura N."/>
            <person name="Kikuchi H."/>
            <person name="Masuho Y."/>
            <person name="Yamashita R."/>
            <person name="Nakai K."/>
            <person name="Yada T."/>
            <person name="Nakamura Y."/>
            <person name="Ohara O."/>
            <person name="Isogai T."/>
            <person name="Sugano S."/>
        </authorList>
    </citation>
    <scope>NUCLEOTIDE SEQUENCE [LARGE SCALE MRNA] (ISOFORMS 1 AND 2)</scope>
    <source>
        <tissue>Brain</tissue>
    </source>
</reference>
<reference key="3">
    <citation type="journal article" date="2006" name="Nature">
        <title>The DNA sequence, annotation and analysis of human chromosome 3.</title>
        <authorList>
            <person name="Muzny D.M."/>
            <person name="Scherer S.E."/>
            <person name="Kaul R."/>
            <person name="Wang J."/>
            <person name="Yu J."/>
            <person name="Sudbrak R."/>
            <person name="Buhay C.J."/>
            <person name="Chen R."/>
            <person name="Cree A."/>
            <person name="Ding Y."/>
            <person name="Dugan-Rocha S."/>
            <person name="Gill R."/>
            <person name="Gunaratne P."/>
            <person name="Harris R.A."/>
            <person name="Hawes A.C."/>
            <person name="Hernandez J."/>
            <person name="Hodgson A.V."/>
            <person name="Hume J."/>
            <person name="Jackson A."/>
            <person name="Khan Z.M."/>
            <person name="Kovar-Smith C."/>
            <person name="Lewis L.R."/>
            <person name="Lozado R.J."/>
            <person name="Metzker M.L."/>
            <person name="Milosavljevic A."/>
            <person name="Miner G.R."/>
            <person name="Morgan M.B."/>
            <person name="Nazareth L.V."/>
            <person name="Scott G."/>
            <person name="Sodergren E."/>
            <person name="Song X.-Z."/>
            <person name="Steffen D."/>
            <person name="Wei S."/>
            <person name="Wheeler D.A."/>
            <person name="Wright M.W."/>
            <person name="Worley K.C."/>
            <person name="Yuan Y."/>
            <person name="Zhang Z."/>
            <person name="Adams C.Q."/>
            <person name="Ansari-Lari M.A."/>
            <person name="Ayele M."/>
            <person name="Brown M.J."/>
            <person name="Chen G."/>
            <person name="Chen Z."/>
            <person name="Clendenning J."/>
            <person name="Clerc-Blankenburg K.P."/>
            <person name="Chen R."/>
            <person name="Chen Z."/>
            <person name="Davis C."/>
            <person name="Delgado O."/>
            <person name="Dinh H.H."/>
            <person name="Dong W."/>
            <person name="Draper H."/>
            <person name="Ernst S."/>
            <person name="Fu G."/>
            <person name="Gonzalez-Garay M.L."/>
            <person name="Garcia D.K."/>
            <person name="Gillett W."/>
            <person name="Gu J."/>
            <person name="Hao B."/>
            <person name="Haugen E."/>
            <person name="Havlak P."/>
            <person name="He X."/>
            <person name="Hennig S."/>
            <person name="Hu S."/>
            <person name="Huang W."/>
            <person name="Jackson L.R."/>
            <person name="Jacob L.S."/>
            <person name="Kelly S.H."/>
            <person name="Kube M."/>
            <person name="Levy R."/>
            <person name="Li Z."/>
            <person name="Liu B."/>
            <person name="Liu J."/>
            <person name="Liu W."/>
            <person name="Lu J."/>
            <person name="Maheshwari M."/>
            <person name="Nguyen B.-V."/>
            <person name="Okwuonu G.O."/>
            <person name="Palmeiri A."/>
            <person name="Pasternak S."/>
            <person name="Perez L.M."/>
            <person name="Phelps K.A."/>
            <person name="Plopper F.J."/>
            <person name="Qiang B."/>
            <person name="Raymond C."/>
            <person name="Rodriguez R."/>
            <person name="Saenphimmachak C."/>
            <person name="Santibanez J."/>
            <person name="Shen H."/>
            <person name="Shen Y."/>
            <person name="Subramanian S."/>
            <person name="Tabor P.E."/>
            <person name="Verduzco D."/>
            <person name="Waldron L."/>
            <person name="Wang J."/>
            <person name="Wang J."/>
            <person name="Wang Q."/>
            <person name="Williams G.A."/>
            <person name="Wong G.K.-S."/>
            <person name="Yao Z."/>
            <person name="Zhang J."/>
            <person name="Zhang X."/>
            <person name="Zhao G."/>
            <person name="Zhou J."/>
            <person name="Zhou Y."/>
            <person name="Nelson D."/>
            <person name="Lehrach H."/>
            <person name="Reinhardt R."/>
            <person name="Naylor S.L."/>
            <person name="Yang H."/>
            <person name="Olson M."/>
            <person name="Weinstock G."/>
            <person name="Gibbs R.A."/>
        </authorList>
    </citation>
    <scope>NUCLEOTIDE SEQUENCE [LARGE SCALE GENOMIC DNA]</scope>
</reference>
<reference key="4">
    <citation type="submission" date="2005-07" db="EMBL/GenBank/DDBJ databases">
        <authorList>
            <person name="Mural R.J."/>
            <person name="Istrail S."/>
            <person name="Sutton G.G."/>
            <person name="Florea L."/>
            <person name="Halpern A.L."/>
            <person name="Mobarry C.M."/>
            <person name="Lippert R."/>
            <person name="Walenz B."/>
            <person name="Shatkay H."/>
            <person name="Dew I."/>
            <person name="Miller J.R."/>
            <person name="Flanigan M.J."/>
            <person name="Edwards N.J."/>
            <person name="Bolanos R."/>
            <person name="Fasulo D."/>
            <person name="Halldorsson B.V."/>
            <person name="Hannenhalli S."/>
            <person name="Turner R."/>
            <person name="Yooseph S."/>
            <person name="Lu F."/>
            <person name="Nusskern D.R."/>
            <person name="Shue B.C."/>
            <person name="Zheng X.H."/>
            <person name="Zhong F."/>
            <person name="Delcher A.L."/>
            <person name="Huson D.H."/>
            <person name="Kravitz S.A."/>
            <person name="Mouchard L."/>
            <person name="Reinert K."/>
            <person name="Remington K.A."/>
            <person name="Clark A.G."/>
            <person name="Waterman M.S."/>
            <person name="Eichler E.E."/>
            <person name="Adams M.D."/>
            <person name="Hunkapiller M.W."/>
            <person name="Myers E.W."/>
            <person name="Venter J.C."/>
        </authorList>
    </citation>
    <scope>NUCLEOTIDE SEQUENCE [LARGE SCALE GENOMIC DNA]</scope>
</reference>
<reference key="5">
    <citation type="journal article" date="2004" name="Genome Res.">
        <title>The status, quality, and expansion of the NIH full-length cDNA project: the Mammalian Gene Collection (MGC).</title>
        <authorList>
            <consortium name="The MGC Project Team"/>
        </authorList>
    </citation>
    <scope>NUCLEOTIDE SEQUENCE [LARGE SCALE MRNA] (ISOFORM 1)</scope>
    <source>
        <tissue>Eye</tissue>
    </source>
</reference>
<reference key="6">
    <citation type="journal article" date="2001" name="J. Biol. Chem.">
        <title>Identification and characterization of a novel inositol hexakisphosphate kinase.</title>
        <authorList>
            <person name="Saiardi A."/>
            <person name="Nagata E."/>
            <person name="Luo H.R."/>
            <person name="Snowman A.M."/>
            <person name="Snyder S.H."/>
        </authorList>
    </citation>
    <scope>SUBCELLULAR LOCATION</scope>
</reference>
<reference key="7">
    <citation type="journal article" date="2008" name="Proc. Natl. Acad. Sci. U.S.A.">
        <title>A quantitative atlas of mitotic phosphorylation.</title>
        <authorList>
            <person name="Dephoure N."/>
            <person name="Zhou C."/>
            <person name="Villen J."/>
            <person name="Beausoleil S.A."/>
            <person name="Bakalarski C.E."/>
            <person name="Elledge S.J."/>
            <person name="Gygi S.P."/>
        </authorList>
    </citation>
    <scope>PHOSPHORYLATION [LARGE SCALE ANALYSIS] AT SER-151</scope>
    <scope>IDENTIFICATION BY MASS SPECTROMETRY [LARGE SCALE ANALYSIS]</scope>
    <source>
        <tissue>Cervix carcinoma</tissue>
    </source>
</reference>
<reference key="8">
    <citation type="journal article" date="2013" name="J. Proteome Res.">
        <title>Toward a comprehensive characterization of a human cancer cell phosphoproteome.</title>
        <authorList>
            <person name="Zhou H."/>
            <person name="Di Palma S."/>
            <person name="Preisinger C."/>
            <person name="Peng M."/>
            <person name="Polat A.N."/>
            <person name="Heck A.J."/>
            <person name="Mohammed S."/>
        </authorList>
    </citation>
    <scope>IDENTIFICATION BY MASS SPECTROMETRY [LARGE SCALE ANALYSIS]</scope>
    <source>
        <tissue>Erythroleukemia</tissue>
    </source>
</reference>
<evidence type="ECO:0000250" key="1"/>
<evidence type="ECO:0000256" key="2">
    <source>
        <dbReference type="SAM" id="MobiDB-lite"/>
    </source>
</evidence>
<evidence type="ECO:0000269" key="3">
    <source>
    </source>
</evidence>
<evidence type="ECO:0000303" key="4">
    <source>
    </source>
</evidence>
<evidence type="ECO:0000305" key="5"/>
<evidence type="ECO:0007744" key="6">
    <source>
    </source>
</evidence>
<organism>
    <name type="scientific">Homo sapiens</name>
    <name type="common">Human</name>
    <dbReference type="NCBI Taxonomy" id="9606"/>
    <lineage>
        <taxon>Eukaryota</taxon>
        <taxon>Metazoa</taxon>
        <taxon>Chordata</taxon>
        <taxon>Craniata</taxon>
        <taxon>Vertebrata</taxon>
        <taxon>Euteleostomi</taxon>
        <taxon>Mammalia</taxon>
        <taxon>Eutheria</taxon>
        <taxon>Euarchontoglires</taxon>
        <taxon>Primates</taxon>
        <taxon>Haplorrhini</taxon>
        <taxon>Catarrhini</taxon>
        <taxon>Hominidae</taxon>
        <taxon>Homo</taxon>
    </lineage>
</organism>